<reference key="1">
    <citation type="submission" date="2000-09" db="EMBL/GenBank/DDBJ databases">
        <title>Interaction analysis of the complete G-alpha subfamily of heterotrimeric G proteins from Caenorhabditis elegans.</title>
        <authorList>
            <person name="Cuppen E."/>
            <person name="Jansen G."/>
            <person name="Plasterk R.H.A."/>
        </authorList>
    </citation>
    <scope>NUCLEOTIDE SEQUENCE [MRNA]</scope>
    <source>
        <strain>Bristol N2</strain>
    </source>
</reference>
<reference key="2">
    <citation type="journal article" date="1998" name="Science">
        <title>Genome sequence of the nematode C. elegans: a platform for investigating biology.</title>
        <authorList>
            <consortium name="The C. elegans sequencing consortium"/>
        </authorList>
    </citation>
    <scope>NUCLEOTIDE SEQUENCE [LARGE SCALE GENOMIC DNA]</scope>
    <source>
        <strain>Bristol N2</strain>
    </source>
</reference>
<reference key="3">
    <citation type="journal article" date="1999" name="Nat. Genet.">
        <title>The complete family of genes encoding G proteins of Caenorhabditis elegans.</title>
        <authorList>
            <person name="Jansen G."/>
            <person name="Thijssen K.L."/>
            <person name="Werner P."/>
            <person name="van der Horst M."/>
            <person name="Hazendonk E."/>
            <person name="Plasterk R.H.A."/>
        </authorList>
    </citation>
    <scope>GENE FAMILY</scope>
    <scope>NOMENCLATURE</scope>
</reference>
<comment type="function">
    <text>Guanine nucleotide-binding proteins (G proteins) are involved as modulators or transducers in various transmembrane signaling systems.</text>
</comment>
<comment type="subunit">
    <text>G proteins are composed of 3 units; alpha, beta and gamma. The alpha chain contains the guanine nucleotide binding site.</text>
</comment>
<comment type="similarity">
    <text evidence="4">Belongs to the G-alpha family.</text>
</comment>
<evidence type="ECO:0000250" key="1"/>
<evidence type="ECO:0000255" key="2"/>
<evidence type="ECO:0000255" key="3">
    <source>
        <dbReference type="PROSITE-ProRule" id="PRU01230"/>
    </source>
</evidence>
<evidence type="ECO:0000305" key="4"/>
<gene>
    <name type="primary">gpa-5</name>
    <name type="ORF">F53B1.7</name>
</gene>
<accession>Q20701</accession>
<dbReference type="EMBL" id="AY008128">
    <property type="protein sequence ID" value="AAG32081.1"/>
    <property type="molecule type" value="mRNA"/>
</dbReference>
<dbReference type="EMBL" id="FO081052">
    <property type="protein sequence ID" value="CCD68830.1"/>
    <property type="molecule type" value="Genomic_DNA"/>
</dbReference>
<dbReference type="PIR" id="T16447">
    <property type="entry name" value="T16447"/>
</dbReference>
<dbReference type="RefSeq" id="NP_508393.1">
    <property type="nucleotide sequence ID" value="NM_075992.1"/>
</dbReference>
<dbReference type="SMR" id="Q20701"/>
<dbReference type="FunCoup" id="Q20701">
    <property type="interactions" value="3"/>
</dbReference>
<dbReference type="STRING" id="6239.F53B1.7.1"/>
<dbReference type="PaxDb" id="6239-F53B1.7"/>
<dbReference type="EnsemblMetazoa" id="F53B1.7.1">
    <property type="protein sequence ID" value="F53B1.7.1"/>
    <property type="gene ID" value="WBGene00001667"/>
</dbReference>
<dbReference type="GeneID" id="180527"/>
<dbReference type="KEGG" id="cel:CELE_F53B1.7"/>
<dbReference type="UCSC" id="F53B1.7">
    <property type="organism name" value="c. elegans"/>
</dbReference>
<dbReference type="AGR" id="WB:WBGene00001667"/>
<dbReference type="CTD" id="180527"/>
<dbReference type="WormBase" id="F53B1.7">
    <property type="protein sequence ID" value="CE04647"/>
    <property type="gene ID" value="WBGene00001667"/>
    <property type="gene designation" value="gpa-5"/>
</dbReference>
<dbReference type="eggNOG" id="KOG0082">
    <property type="taxonomic scope" value="Eukaryota"/>
</dbReference>
<dbReference type="GeneTree" id="ENSGT00970000196059"/>
<dbReference type="HOGENOM" id="CLU_014184_6_0_1"/>
<dbReference type="InParanoid" id="Q20701"/>
<dbReference type="OMA" id="HMRQTTL"/>
<dbReference type="OrthoDB" id="5817230at2759"/>
<dbReference type="PhylomeDB" id="Q20701"/>
<dbReference type="Reactome" id="R-CEL-418597">
    <property type="pathway name" value="G alpha (z) signalling events"/>
</dbReference>
<dbReference type="SignaLink" id="Q20701"/>
<dbReference type="PRO" id="PR:Q20701"/>
<dbReference type="Proteomes" id="UP000001940">
    <property type="component" value="Chromosome X"/>
</dbReference>
<dbReference type="GO" id="GO:0030424">
    <property type="term" value="C:axon"/>
    <property type="evidence" value="ECO:0000314"/>
    <property type="project" value="WormBase"/>
</dbReference>
<dbReference type="GO" id="GO:0005737">
    <property type="term" value="C:cytoplasm"/>
    <property type="evidence" value="ECO:0000318"/>
    <property type="project" value="GO_Central"/>
</dbReference>
<dbReference type="GO" id="GO:0005834">
    <property type="term" value="C:heterotrimeric G-protein complex"/>
    <property type="evidence" value="ECO:0000318"/>
    <property type="project" value="GO_Central"/>
</dbReference>
<dbReference type="GO" id="GO:0043025">
    <property type="term" value="C:neuronal cell body"/>
    <property type="evidence" value="ECO:0000314"/>
    <property type="project" value="WormBase"/>
</dbReference>
<dbReference type="GO" id="GO:0045202">
    <property type="term" value="C:synapse"/>
    <property type="evidence" value="ECO:0000314"/>
    <property type="project" value="WormBase"/>
</dbReference>
<dbReference type="GO" id="GO:0001664">
    <property type="term" value="F:G protein-coupled receptor binding"/>
    <property type="evidence" value="ECO:0000318"/>
    <property type="project" value="GO_Central"/>
</dbReference>
<dbReference type="GO" id="GO:0031683">
    <property type="term" value="F:G-protein beta/gamma-subunit complex binding"/>
    <property type="evidence" value="ECO:0000318"/>
    <property type="project" value="GO_Central"/>
</dbReference>
<dbReference type="GO" id="GO:0005525">
    <property type="term" value="F:GTP binding"/>
    <property type="evidence" value="ECO:0007669"/>
    <property type="project" value="UniProtKB-KW"/>
</dbReference>
<dbReference type="GO" id="GO:0003924">
    <property type="term" value="F:GTPase activity"/>
    <property type="evidence" value="ECO:0000318"/>
    <property type="project" value="GO_Central"/>
</dbReference>
<dbReference type="GO" id="GO:0046872">
    <property type="term" value="F:metal ion binding"/>
    <property type="evidence" value="ECO:0007669"/>
    <property type="project" value="UniProtKB-KW"/>
</dbReference>
<dbReference type="GO" id="GO:0007188">
    <property type="term" value="P:adenylate cyclase-modulating G protein-coupled receptor signaling pathway"/>
    <property type="evidence" value="ECO:0000318"/>
    <property type="project" value="GO_Central"/>
</dbReference>
<dbReference type="CDD" id="cd00066">
    <property type="entry name" value="G-alpha"/>
    <property type="match status" value="1"/>
</dbReference>
<dbReference type="FunFam" id="1.10.400.10:FF:000028">
    <property type="entry name" value="Guanine nucleotide-binding protein alpha-5 subunit"/>
    <property type="match status" value="1"/>
</dbReference>
<dbReference type="FunFam" id="3.40.50.300:FF:000692">
    <property type="entry name" value="Guanine nucleotide-binding protein subunit alpha"/>
    <property type="match status" value="2"/>
</dbReference>
<dbReference type="Gene3D" id="1.10.400.10">
    <property type="entry name" value="GI Alpha 1, domain 2-like"/>
    <property type="match status" value="1"/>
</dbReference>
<dbReference type="Gene3D" id="3.40.50.300">
    <property type="entry name" value="P-loop containing nucleotide triphosphate hydrolases"/>
    <property type="match status" value="1"/>
</dbReference>
<dbReference type="InterPro" id="IPR001019">
    <property type="entry name" value="Gprotein_alpha_su"/>
</dbReference>
<dbReference type="InterPro" id="IPR011025">
    <property type="entry name" value="GproteinA_insert"/>
</dbReference>
<dbReference type="InterPro" id="IPR027417">
    <property type="entry name" value="P-loop_NTPase"/>
</dbReference>
<dbReference type="PANTHER" id="PTHR10218">
    <property type="entry name" value="GTP-BINDING PROTEIN ALPHA SUBUNIT"/>
    <property type="match status" value="1"/>
</dbReference>
<dbReference type="PANTHER" id="PTHR10218:SF302">
    <property type="entry name" value="GUANINE NUCLEOTIDE-BINDING PROTEIN ALPHA-5 SUBUNIT"/>
    <property type="match status" value="1"/>
</dbReference>
<dbReference type="Pfam" id="PF00503">
    <property type="entry name" value="G-alpha"/>
    <property type="match status" value="1"/>
</dbReference>
<dbReference type="PRINTS" id="PR00318">
    <property type="entry name" value="GPROTEINA"/>
</dbReference>
<dbReference type="SMART" id="SM00275">
    <property type="entry name" value="G_alpha"/>
    <property type="match status" value="1"/>
</dbReference>
<dbReference type="SUPFAM" id="SSF52540">
    <property type="entry name" value="P-loop containing nucleoside triphosphate hydrolases"/>
    <property type="match status" value="1"/>
</dbReference>
<dbReference type="SUPFAM" id="SSF47895">
    <property type="entry name" value="Transducin (alpha subunit), insertion domain"/>
    <property type="match status" value="1"/>
</dbReference>
<dbReference type="PROSITE" id="PS51882">
    <property type="entry name" value="G_ALPHA"/>
    <property type="match status" value="1"/>
</dbReference>
<proteinExistence type="evidence at transcript level"/>
<name>GPA5_CAEEL</name>
<feature type="initiator methionine" description="Removed" evidence="2">
    <location>
        <position position="1"/>
    </location>
</feature>
<feature type="chain" id="PRO_0000203637" description="Guanine nucleotide-binding protein alpha-5 subunit">
    <location>
        <begin position="2"/>
        <end position="385"/>
    </location>
</feature>
<feature type="domain" description="G-alpha" evidence="3">
    <location>
        <begin position="32"/>
        <end position="385"/>
    </location>
</feature>
<feature type="region of interest" description="G1 motif" evidence="3">
    <location>
        <begin position="35"/>
        <end position="48"/>
    </location>
</feature>
<feature type="region of interest" description="G2 motif" evidence="3">
    <location>
        <begin position="172"/>
        <end position="180"/>
    </location>
</feature>
<feature type="region of interest" description="G3 motif" evidence="3">
    <location>
        <begin position="195"/>
        <end position="204"/>
    </location>
</feature>
<feature type="region of interest" description="G4 motif" evidence="3">
    <location>
        <begin position="294"/>
        <end position="301"/>
    </location>
</feature>
<feature type="region of interest" description="G5 motif" evidence="3">
    <location>
        <begin position="355"/>
        <end position="360"/>
    </location>
</feature>
<feature type="binding site" evidence="1">
    <location>
        <begin position="40"/>
        <end position="47"/>
    </location>
    <ligand>
        <name>GTP</name>
        <dbReference type="ChEBI" id="CHEBI:37565"/>
    </ligand>
</feature>
<feature type="binding site" evidence="1">
    <location>
        <position position="47"/>
    </location>
    <ligand>
        <name>Mg(2+)</name>
        <dbReference type="ChEBI" id="CHEBI:18420"/>
    </ligand>
</feature>
<feature type="binding site" evidence="1">
    <location>
        <begin position="174"/>
        <end position="180"/>
    </location>
    <ligand>
        <name>GTP</name>
        <dbReference type="ChEBI" id="CHEBI:37565"/>
    </ligand>
</feature>
<feature type="binding site" evidence="1">
    <location>
        <position position="180"/>
    </location>
    <ligand>
        <name>Mg(2+)</name>
        <dbReference type="ChEBI" id="CHEBI:18420"/>
    </ligand>
</feature>
<feature type="binding site" evidence="1">
    <location>
        <begin position="199"/>
        <end position="203"/>
    </location>
    <ligand>
        <name>GTP</name>
        <dbReference type="ChEBI" id="CHEBI:37565"/>
    </ligand>
</feature>
<feature type="binding site" evidence="1">
    <location>
        <begin position="298"/>
        <end position="301"/>
    </location>
    <ligand>
        <name>GTP</name>
        <dbReference type="ChEBI" id="CHEBI:37565"/>
    </ligand>
</feature>
<feature type="binding site" evidence="1">
    <location>
        <position position="357"/>
    </location>
    <ligand>
        <name>GTP</name>
        <dbReference type="ChEBI" id="CHEBI:37565"/>
    </ligand>
</feature>
<feature type="lipid moiety-binding region" description="N-myristoyl glycine" evidence="2">
    <location>
        <position position="2"/>
    </location>
</feature>
<feature type="lipid moiety-binding region" description="S-palmitoyl cysteine" evidence="2">
    <location>
        <position position="6"/>
    </location>
</feature>
<sequence>MGLVTCKQEREAELQNRQIDTQIRIENQANKRKIKMLLLGVTDSGKSTIVKQMRVNYLDGFNETEVVNAIFVIRNNIIDAFKNICNIILHSDITVTQEEKVLVKLFAYESGKIELMQEVDELNVINAVSGYECIKQFFERFAFHPMVPDHIHYFYPNLDRIASSNYVPTAEDLIHMRQTTLGVHEISFDYTKHIIRLIDVGGQKTERRKWIHFFEGVTAVMFVCSLASFNQTTEEEPKAFVWESSLNKVQNKVLVRSAGKAKVEKPGLINRLDESVDLFKSIRENSFLKMSNFMLFLNKKDLLTKKLTKVVFSDYFPDYKKWITNDNSDVSVAEFIENMFREGLEPEKRMYAHLTQATVTANIEGTFALCCDVIFGKNYEDTNLE</sequence>
<keyword id="KW-0342">GTP-binding</keyword>
<keyword id="KW-0449">Lipoprotein</keyword>
<keyword id="KW-0460">Magnesium</keyword>
<keyword id="KW-0479">Metal-binding</keyword>
<keyword id="KW-0519">Myristate</keyword>
<keyword id="KW-0547">Nucleotide-binding</keyword>
<keyword id="KW-0564">Palmitate</keyword>
<keyword id="KW-1185">Reference proteome</keyword>
<keyword id="KW-0807">Transducer</keyword>
<protein>
    <recommendedName>
        <fullName>Guanine nucleotide-binding protein alpha-5 subunit</fullName>
    </recommendedName>
</protein>
<organism>
    <name type="scientific">Caenorhabditis elegans</name>
    <dbReference type="NCBI Taxonomy" id="6239"/>
    <lineage>
        <taxon>Eukaryota</taxon>
        <taxon>Metazoa</taxon>
        <taxon>Ecdysozoa</taxon>
        <taxon>Nematoda</taxon>
        <taxon>Chromadorea</taxon>
        <taxon>Rhabditida</taxon>
        <taxon>Rhabditina</taxon>
        <taxon>Rhabditomorpha</taxon>
        <taxon>Rhabditoidea</taxon>
        <taxon>Rhabditidae</taxon>
        <taxon>Peloderinae</taxon>
        <taxon>Caenorhabditis</taxon>
    </lineage>
</organism>